<organism>
    <name type="scientific">Oryza sativa subsp. indica</name>
    <name type="common">Rice</name>
    <dbReference type="NCBI Taxonomy" id="39946"/>
    <lineage>
        <taxon>Eukaryota</taxon>
        <taxon>Viridiplantae</taxon>
        <taxon>Streptophyta</taxon>
        <taxon>Embryophyta</taxon>
        <taxon>Tracheophyta</taxon>
        <taxon>Spermatophyta</taxon>
        <taxon>Magnoliopsida</taxon>
        <taxon>Liliopsida</taxon>
        <taxon>Poales</taxon>
        <taxon>Poaceae</taxon>
        <taxon>BOP clade</taxon>
        <taxon>Oryzoideae</taxon>
        <taxon>Oryzeae</taxon>
        <taxon>Oryzinae</taxon>
        <taxon>Oryza</taxon>
        <taxon>Oryza sativa</taxon>
    </lineage>
</organism>
<gene>
    <name type="primary">rps3</name>
    <name type="ORF">9311114</name>
</gene>
<geneLocation type="chloroplast"/>
<protein>
    <recommendedName>
        <fullName evidence="2">Small ribosomal subunit protein uS3c</fullName>
    </recommendedName>
    <alternativeName>
        <fullName>30S ribosomal protein S3, chloroplastic</fullName>
    </alternativeName>
</protein>
<evidence type="ECO:0000250" key="1"/>
<evidence type="ECO:0000305" key="2"/>
<accession>P0C484</accession>
<accession>P12146</accession>
<accession>Q6QXY4</accession>
<accession>Q6QY47</accession>
<keyword id="KW-0150">Chloroplast</keyword>
<keyword id="KW-0934">Plastid</keyword>
<keyword id="KW-1185">Reference proteome</keyword>
<keyword id="KW-0687">Ribonucleoprotein</keyword>
<keyword id="KW-0689">Ribosomal protein</keyword>
<keyword id="KW-0694">RNA-binding</keyword>
<keyword id="KW-0699">rRNA-binding</keyword>
<dbReference type="EMBL" id="AY522329">
    <property type="protein sequence ID" value="AAS46082.1"/>
    <property type="molecule type" value="Genomic_DNA"/>
</dbReference>
<dbReference type="RefSeq" id="YP_009161402.1">
    <property type="nucleotide sequence ID" value="NC_027678.1"/>
</dbReference>
<dbReference type="RefSeq" id="YP_654242.1">
    <property type="nucleotide sequence ID" value="NC_008155.1"/>
</dbReference>
<dbReference type="SMR" id="P0C484"/>
<dbReference type="STRING" id="39946.P0C484"/>
<dbReference type="EnsemblPlants" id="BGIOSGA023760-TA">
    <property type="protein sequence ID" value="BGIOSGA023760-PA"/>
    <property type="gene ID" value="BGIOSGA023760"/>
</dbReference>
<dbReference type="EnsemblPlants" id="BGIOSGA030606-TA">
    <property type="protein sequence ID" value="BGIOSGA030606-PA"/>
    <property type="gene ID" value="BGIOSGA030606"/>
</dbReference>
<dbReference type="EnsemblPlants" id="BGIOSGA038904-TA">
    <property type="protein sequence ID" value="BGIOSGA038904-PA"/>
    <property type="gene ID" value="BGIOSGA038904"/>
</dbReference>
<dbReference type="EnsemblPlants" id="BGIOSGA039202-TA">
    <property type="protein sequence ID" value="BGIOSGA039202-PA"/>
    <property type="gene ID" value="BGIOSGA039202"/>
</dbReference>
<dbReference type="EnsemblPlants" id="BGIOSGA040027-TA">
    <property type="protein sequence ID" value="BGIOSGA040027-PA"/>
    <property type="gene ID" value="BGIOSGA040027"/>
</dbReference>
<dbReference type="GeneID" id="4126900"/>
<dbReference type="Gramene" id="BGIOSGA023760-TA">
    <property type="protein sequence ID" value="BGIOSGA023760-PA"/>
    <property type="gene ID" value="BGIOSGA023760"/>
</dbReference>
<dbReference type="Gramene" id="BGIOSGA030606-TA">
    <property type="protein sequence ID" value="BGIOSGA030606-PA"/>
    <property type="gene ID" value="BGIOSGA030606"/>
</dbReference>
<dbReference type="Gramene" id="BGIOSGA038904-TA">
    <property type="protein sequence ID" value="BGIOSGA038904-PA"/>
    <property type="gene ID" value="BGIOSGA038904"/>
</dbReference>
<dbReference type="Gramene" id="BGIOSGA039202-TA">
    <property type="protein sequence ID" value="BGIOSGA039202-PA"/>
    <property type="gene ID" value="BGIOSGA039202"/>
</dbReference>
<dbReference type="Gramene" id="BGIOSGA040027-TA">
    <property type="protein sequence ID" value="BGIOSGA040027-PA"/>
    <property type="gene ID" value="BGIOSGA040027"/>
</dbReference>
<dbReference type="HOGENOM" id="CLU_058591_0_2_1"/>
<dbReference type="OMA" id="NANTTYG"/>
<dbReference type="Proteomes" id="UP000007015">
    <property type="component" value="Chloroplast"/>
</dbReference>
<dbReference type="GO" id="GO:0009507">
    <property type="term" value="C:chloroplast"/>
    <property type="evidence" value="ECO:0007669"/>
    <property type="project" value="UniProtKB-SubCell"/>
</dbReference>
<dbReference type="GO" id="GO:0022627">
    <property type="term" value="C:cytosolic small ribosomal subunit"/>
    <property type="evidence" value="ECO:0007669"/>
    <property type="project" value="TreeGrafter"/>
</dbReference>
<dbReference type="GO" id="GO:0009536">
    <property type="term" value="C:plastid"/>
    <property type="evidence" value="ECO:0000305"/>
    <property type="project" value="Gramene"/>
</dbReference>
<dbReference type="GO" id="GO:0019843">
    <property type="term" value="F:rRNA binding"/>
    <property type="evidence" value="ECO:0007669"/>
    <property type="project" value="UniProtKB-KW"/>
</dbReference>
<dbReference type="GO" id="GO:0003735">
    <property type="term" value="F:structural constituent of ribosome"/>
    <property type="evidence" value="ECO:0007669"/>
    <property type="project" value="InterPro"/>
</dbReference>
<dbReference type="GO" id="GO:0006412">
    <property type="term" value="P:translation"/>
    <property type="evidence" value="ECO:0007669"/>
    <property type="project" value="UniProtKB-UniRule"/>
</dbReference>
<dbReference type="CDD" id="cd02412">
    <property type="entry name" value="KH-II_30S_S3"/>
    <property type="match status" value="1"/>
</dbReference>
<dbReference type="FunFam" id="3.30.1140.32:FF:000003">
    <property type="entry name" value="30S ribosomal protein S3, chloroplastic"/>
    <property type="match status" value="1"/>
</dbReference>
<dbReference type="FunFam" id="3.30.300.20:FF:000008">
    <property type="entry name" value="30S ribosomal protein S3, chloroplastic"/>
    <property type="match status" value="1"/>
</dbReference>
<dbReference type="Gene3D" id="3.30.300.20">
    <property type="match status" value="1"/>
</dbReference>
<dbReference type="Gene3D" id="3.30.1140.32">
    <property type="entry name" value="Ribosomal protein S3, C-terminal domain"/>
    <property type="match status" value="1"/>
</dbReference>
<dbReference type="HAMAP" id="MF_01309_B">
    <property type="entry name" value="Ribosomal_uS3_B"/>
    <property type="match status" value="1"/>
</dbReference>
<dbReference type="InterPro" id="IPR015946">
    <property type="entry name" value="KH_dom-like_a/b"/>
</dbReference>
<dbReference type="InterPro" id="IPR009019">
    <property type="entry name" value="KH_sf_prok-type"/>
</dbReference>
<dbReference type="InterPro" id="IPR036419">
    <property type="entry name" value="Ribosomal_S3_C_sf"/>
</dbReference>
<dbReference type="InterPro" id="IPR005704">
    <property type="entry name" value="Ribosomal_uS3_bac-typ"/>
</dbReference>
<dbReference type="InterPro" id="IPR001351">
    <property type="entry name" value="Ribosomal_uS3_C"/>
</dbReference>
<dbReference type="InterPro" id="IPR018280">
    <property type="entry name" value="Ribosomal_uS3_CS"/>
</dbReference>
<dbReference type="NCBIfam" id="TIGR01009">
    <property type="entry name" value="rpsC_bact"/>
    <property type="match status" value="1"/>
</dbReference>
<dbReference type="PANTHER" id="PTHR11760">
    <property type="entry name" value="30S/40S RIBOSOMAL PROTEIN S3"/>
    <property type="match status" value="1"/>
</dbReference>
<dbReference type="PANTHER" id="PTHR11760:SF42">
    <property type="entry name" value="SMALL RIBOSOMAL SUBUNIT PROTEIN US3C"/>
    <property type="match status" value="1"/>
</dbReference>
<dbReference type="Pfam" id="PF00189">
    <property type="entry name" value="Ribosomal_S3_C"/>
    <property type="match status" value="1"/>
</dbReference>
<dbReference type="SUPFAM" id="SSF54814">
    <property type="entry name" value="Prokaryotic type KH domain (KH-domain type II)"/>
    <property type="match status" value="1"/>
</dbReference>
<dbReference type="SUPFAM" id="SSF54821">
    <property type="entry name" value="Ribosomal protein S3 C-terminal domain"/>
    <property type="match status" value="1"/>
</dbReference>
<dbReference type="PROSITE" id="PS00548">
    <property type="entry name" value="RIBOSOMAL_S3"/>
    <property type="match status" value="1"/>
</dbReference>
<proteinExistence type="inferred from homology"/>
<sequence length="239" mass="27518">MGQKINPLGFRLGTTQNHHSFWFAQPKNYSEGLQEDKKIRNCIKNYIQKNRKKGSNRKIEADSSFEVITHNKKMDSGSSSEVITHIEIQKEIDTIHVIIHIGFPNLLKKKGAIEELEKDLQKEVNSVNQRLNIGIEKVKEPYRQPNILAEYIAFQLKNRVSFRKAMKKAIELTKKTDIKGVKVKIAGRLAGKEIARAECIKKGRLPLQTIRAKIDYCCYPIRTIYGVLGVKIWIFVDEE</sequence>
<reference key="1">
    <citation type="journal article" date="2004" name="Plant Physiol.">
        <title>A comparison of rice chloroplast genomes.</title>
        <authorList>
            <person name="Tang J."/>
            <person name="Xia H."/>
            <person name="Cao M."/>
            <person name="Zhang X."/>
            <person name="Zeng W."/>
            <person name="Hu S."/>
            <person name="Tong W."/>
            <person name="Wang J."/>
            <person name="Wang J."/>
            <person name="Yu J."/>
            <person name="Yang H."/>
            <person name="Zhu L."/>
        </authorList>
    </citation>
    <scope>NUCLEOTIDE SEQUENCE [LARGE SCALE GENOMIC DNA]</scope>
    <source>
        <strain>cv. 93-11</strain>
    </source>
</reference>
<comment type="subunit">
    <text evidence="1">Part of the 30S ribosomal subunit.</text>
</comment>
<comment type="subcellular location">
    <subcellularLocation>
        <location>Plastid</location>
        <location>Chloroplast</location>
    </subcellularLocation>
</comment>
<comment type="similarity">
    <text evidence="2">Belongs to the universal ribosomal protein uS3 family.</text>
</comment>
<name>RR3_ORYSI</name>
<feature type="chain" id="PRO_0000290081" description="Small ribosomal subunit protein uS3c">
    <location>
        <begin position="1"/>
        <end position="239"/>
    </location>
</feature>
<feature type="domain" description="KH type-2">
    <location>
        <begin position="43"/>
        <end position="139"/>
    </location>
</feature>